<dbReference type="EC" id="2.7.10.-"/>
<dbReference type="EMBL" id="Y15162">
    <property type="protein sequence ID" value="CAA75431.1"/>
    <property type="molecule type" value="Genomic_DNA"/>
</dbReference>
<dbReference type="SMR" id="O52788"/>
<dbReference type="KEGG" id="ag:CAA75431"/>
<dbReference type="BRENDA" id="2.7.10.1">
    <property type="organism ID" value="103"/>
</dbReference>
<dbReference type="UniPathway" id="UPA00631"/>
<dbReference type="GO" id="GO:0005886">
    <property type="term" value="C:plasma membrane"/>
    <property type="evidence" value="ECO:0007669"/>
    <property type="project" value="UniProtKB-SubCell"/>
</dbReference>
<dbReference type="GO" id="GO:0005524">
    <property type="term" value="F:ATP binding"/>
    <property type="evidence" value="ECO:0007669"/>
    <property type="project" value="UniProtKB-KW"/>
</dbReference>
<dbReference type="GO" id="GO:0004713">
    <property type="term" value="F:protein tyrosine kinase activity"/>
    <property type="evidence" value="ECO:0007669"/>
    <property type="project" value="UniProtKB-KW"/>
</dbReference>
<dbReference type="GO" id="GO:0000271">
    <property type="term" value="P:polysaccharide biosynthetic process"/>
    <property type="evidence" value="ECO:0007669"/>
    <property type="project" value="UniProtKB-KW"/>
</dbReference>
<dbReference type="CDD" id="cd05387">
    <property type="entry name" value="BY-kinase"/>
    <property type="match status" value="1"/>
</dbReference>
<dbReference type="FunFam" id="3.40.50.300:FF:000527">
    <property type="entry name" value="Tyrosine-protein kinase etk"/>
    <property type="match status" value="1"/>
</dbReference>
<dbReference type="Gene3D" id="1.10.287.1490">
    <property type="match status" value="1"/>
</dbReference>
<dbReference type="Gene3D" id="3.40.50.300">
    <property type="entry name" value="P-loop containing nucleotide triphosphate hydrolases"/>
    <property type="match status" value="1"/>
</dbReference>
<dbReference type="InterPro" id="IPR025669">
    <property type="entry name" value="AAA_dom"/>
</dbReference>
<dbReference type="InterPro" id="IPR050445">
    <property type="entry name" value="Bact_polysacc_biosynth/exp"/>
</dbReference>
<dbReference type="InterPro" id="IPR032807">
    <property type="entry name" value="GNVR"/>
</dbReference>
<dbReference type="InterPro" id="IPR003856">
    <property type="entry name" value="LPS_length_determ_N_term"/>
</dbReference>
<dbReference type="InterPro" id="IPR027417">
    <property type="entry name" value="P-loop_NTPase"/>
</dbReference>
<dbReference type="InterPro" id="IPR005702">
    <property type="entry name" value="Wzc-like_C"/>
</dbReference>
<dbReference type="NCBIfam" id="TIGR01007">
    <property type="entry name" value="eps_fam"/>
    <property type="match status" value="1"/>
</dbReference>
<dbReference type="PANTHER" id="PTHR32309">
    <property type="entry name" value="TYROSINE-PROTEIN KINASE"/>
    <property type="match status" value="1"/>
</dbReference>
<dbReference type="PANTHER" id="PTHR32309:SF32">
    <property type="entry name" value="TYROSINE-PROTEIN KINASE ETK-RELATED"/>
    <property type="match status" value="1"/>
</dbReference>
<dbReference type="Pfam" id="PF13614">
    <property type="entry name" value="AAA_31"/>
    <property type="match status" value="1"/>
</dbReference>
<dbReference type="Pfam" id="PF13807">
    <property type="entry name" value="GNVR"/>
    <property type="match status" value="1"/>
</dbReference>
<dbReference type="Pfam" id="PF02706">
    <property type="entry name" value="Wzz"/>
    <property type="match status" value="1"/>
</dbReference>
<dbReference type="SUPFAM" id="SSF52540">
    <property type="entry name" value="P-loop containing nucleoside triphosphate hydrolases"/>
    <property type="match status" value="1"/>
</dbReference>
<feature type="chain" id="PRO_0000212352" description="Tyrosine-protein kinase ptk">
    <location>
        <begin position="1"/>
        <end position="733"/>
    </location>
</feature>
<feature type="transmembrane region" description="Helical" evidence="1">
    <location>
        <begin position="19"/>
        <end position="39"/>
    </location>
</feature>
<feature type="transmembrane region" description="Helical" evidence="1">
    <location>
        <begin position="438"/>
        <end position="458"/>
    </location>
</feature>
<feature type="binding site" evidence="1">
    <location>
        <begin position="542"/>
        <end position="550"/>
    </location>
    <ligand>
        <name>ATP</name>
        <dbReference type="ChEBI" id="CHEBI:30616"/>
    </ligand>
</feature>
<feature type="mutagenesis site" description="No loss of autophosphorylation." evidence="2">
    <original>K</original>
    <variation>M</variation>
    <location>
        <position position="436"/>
    </location>
</feature>
<feature type="mutagenesis site" description="Loss of autophosphorylation." evidence="2">
    <original>K</original>
    <variation>M</variation>
    <location>
        <position position="549"/>
    </location>
</feature>
<feature type="mutagenesis site" description="Loss of autophosphorylation." evidence="2">
    <original>S</original>
    <variation>C</variation>
    <location>
        <position position="550"/>
    </location>
</feature>
<feature type="mutagenesis site" description="Loss of autophosphorylation." evidence="2">
    <original>D</original>
    <variation>N</variation>
    <location>
        <position position="651"/>
    </location>
</feature>
<keyword id="KW-0067">ATP-binding</keyword>
<keyword id="KW-0997">Cell inner membrane</keyword>
<keyword id="KW-1003">Cell membrane</keyword>
<keyword id="KW-0270">Exopolysaccharide synthesis</keyword>
<keyword id="KW-0418">Kinase</keyword>
<keyword id="KW-0460">Magnesium</keyword>
<keyword id="KW-0464">Manganese</keyword>
<keyword id="KW-0472">Membrane</keyword>
<keyword id="KW-0547">Nucleotide-binding</keyword>
<keyword id="KW-0597">Phosphoprotein</keyword>
<keyword id="KW-0808">Transferase</keyword>
<keyword id="KW-0812">Transmembrane</keyword>
<keyword id="KW-1133">Transmembrane helix</keyword>
<keyword id="KW-0829">Tyrosine-protein kinase</keyword>
<evidence type="ECO:0000255" key="1"/>
<evidence type="ECO:0000269" key="2">
    <source>
    </source>
</evidence>
<evidence type="ECO:0000305" key="3"/>
<comment type="function">
    <text>May be involved in the production and the transport of exopolysaccharides.</text>
</comment>
<comment type="catalytic activity">
    <reaction>
        <text>L-tyrosyl-[protein] + ATP = O-phospho-L-tyrosyl-[protein] + ADP + H(+)</text>
        <dbReference type="Rhea" id="RHEA:10596"/>
        <dbReference type="Rhea" id="RHEA-COMP:10136"/>
        <dbReference type="Rhea" id="RHEA-COMP:20101"/>
        <dbReference type="ChEBI" id="CHEBI:15378"/>
        <dbReference type="ChEBI" id="CHEBI:30616"/>
        <dbReference type="ChEBI" id="CHEBI:46858"/>
        <dbReference type="ChEBI" id="CHEBI:61978"/>
        <dbReference type="ChEBI" id="CHEBI:456216"/>
    </reaction>
</comment>
<comment type="cofactor">
    <cofactor evidence="3">
        <name>Mg(2+)</name>
        <dbReference type="ChEBI" id="CHEBI:18420"/>
    </cofactor>
    <cofactor evidence="3">
        <name>Mn(2+)</name>
        <dbReference type="ChEBI" id="CHEBI:29035"/>
    </cofactor>
</comment>
<comment type="pathway">
    <text>Glycan metabolism; exopolysaccharide biosynthesis.</text>
</comment>
<comment type="subcellular location">
    <subcellularLocation>
        <location>Cell inner membrane</location>
        <topology>Multi-pass membrane protein</topology>
    </subcellularLocation>
</comment>
<comment type="PTM">
    <text>Autophosphorylated on several Tyr residues. Dephosphorylated by ptp.</text>
</comment>
<comment type="similarity">
    <text evidence="3">Belongs to the etk/wzc family.</text>
</comment>
<organism>
    <name type="scientific">Acinetobacter johnsonii</name>
    <dbReference type="NCBI Taxonomy" id="40214"/>
    <lineage>
        <taxon>Bacteria</taxon>
        <taxon>Pseudomonadati</taxon>
        <taxon>Pseudomonadota</taxon>
        <taxon>Gammaproteobacteria</taxon>
        <taxon>Moraxellales</taxon>
        <taxon>Moraxellaceae</taxon>
        <taxon>Acinetobacter</taxon>
    </lineage>
</organism>
<name>PTK_ACIJO</name>
<proteinExistence type="evidence at protein level"/>
<accession>O52788</accession>
<sequence>MYVMSQTTNTEDTIDLKELFFSLIAQWKLIALCIILSLICALLYLRATPDTYSVNALVQVEENKGASAALLGDLSSMIEQKQPAQAEIEILKSRLVLGNVIQHLNLDLKISGTENSFTDRLLSPHHYQTEYQPKSVLFKDDEKVFDIRQFNIPASFRDKKIELRFKDGQFSLTNTQTEQVILTGKTNQSNTLRTADGLWNISIYTQDQLNDVYLIQKQSLPAAVNNILTNYSVAEKGKLTGILGLNYQGTDKTHITQVLNAILVSYSQQNIERRSAETAQTLKFLDEQLPELKQQLDVAEREFNKFRQQYNTVDVTKESELFLTQSVTLETQKAQLEQQVAEAGAKYTSEHPVMKQMNAQLGAINKKIGELNATLKELPDLQRRYLQLYREVEVKQQLYTALLNSYQQLRIAKAGEIGNVRIVDTAVEPIEPIAPKKLQILILSIFLGGFLGTLLALLRNMMRSGIKDSTQIENELDLPVYATVPRSPVQESRINILKKKKNIPILAVKNSDDIAIESLRSMRTAIHFALSSARNNLITISGPAPEVGKSFISTNLATILAQSDKRVLIIDADLRRGYLHKYFNLDTQPGLTELLNGQQSLETVIRHTEVPGLSVISRGKSPANPSELLSSNQFKNLLEQMSEKFDHVIIDTPPVLAVTDGIIISQYTGVNLVIARYAKTQMKELELTLNRFEQAGVKVNGFILNDIQRSSAGYGYGYGYNYAYAYKANKESD</sequence>
<gene>
    <name type="primary">ptk</name>
</gene>
<reference key="1">
    <citation type="journal article" date="1997" name="Gene">
        <title>Characterization of a bacterial gene encoding an autophosphorylating protein tyrosine kinase.</title>
        <authorList>
            <person name="Grangeasse C."/>
            <person name="Doublet P."/>
            <person name="Vaganay E."/>
            <person name="Vincent C."/>
            <person name="Deleage G."/>
            <person name="Duclos B."/>
            <person name="Cozzone A.J."/>
        </authorList>
    </citation>
    <scope>NUCLEOTIDE SEQUENCE [GENOMIC DNA]</scope>
    <scope>CHARACTERIZATION</scope>
</reference>
<reference key="2">
    <citation type="journal article" date="1996" name="J. Mol. Biol.">
        <title>Autophosphorylation of a bacterial protein at tyrosine.</title>
        <authorList>
            <person name="Duclos B."/>
            <person name="Grangeasse C."/>
            <person name="Vaganay E."/>
            <person name="Riberty M."/>
            <person name="Cozzone A.J."/>
        </authorList>
    </citation>
    <scope>CHARACTERIZATION</scope>
</reference>
<reference key="3">
    <citation type="journal article" date="1999" name="FEBS Lett.">
        <title>On the binding of ATP to the autophosphorylating protein, Ptk, of the bacterium Acinetobacter johnsonii.</title>
        <authorList>
            <person name="Doublet P."/>
            <person name="Vincent C."/>
            <person name="Grangeasse C."/>
            <person name="Cozzone A.J."/>
            <person name="Duclos B."/>
        </authorList>
    </citation>
    <scope>MUTAGENESIS OF LYS-436; LYS-549; SER-550 AND ASP-651</scope>
</reference>
<protein>
    <recommendedName>
        <fullName>Tyrosine-protein kinase ptk</fullName>
        <ecNumber>2.7.10.-</ecNumber>
    </recommendedName>
</protein>